<accession>A6MM37</accession>
<dbReference type="EMBL" id="EF380351">
    <property type="protein sequence ID" value="ABQ45250.1"/>
    <property type="molecule type" value="Genomic_DNA"/>
</dbReference>
<dbReference type="RefSeq" id="YP_001294185.1">
    <property type="nucleotide sequence ID" value="NC_009599.1"/>
</dbReference>
<dbReference type="SMR" id="A6MM37"/>
<dbReference type="GeneID" id="5236910"/>
<dbReference type="GO" id="GO:0009535">
    <property type="term" value="C:chloroplast thylakoid membrane"/>
    <property type="evidence" value="ECO:0007669"/>
    <property type="project" value="UniProtKB-SubCell"/>
</dbReference>
<dbReference type="GO" id="GO:0015979">
    <property type="term" value="P:photosynthesis"/>
    <property type="evidence" value="ECO:0007669"/>
    <property type="project" value="UniProtKB-UniRule"/>
</dbReference>
<dbReference type="FunFam" id="1.25.40.10:FF:000004">
    <property type="entry name" value="Photosystem I assembly protein Ycf3"/>
    <property type="match status" value="1"/>
</dbReference>
<dbReference type="Gene3D" id="1.25.40.10">
    <property type="entry name" value="Tetratricopeptide repeat domain"/>
    <property type="match status" value="1"/>
</dbReference>
<dbReference type="HAMAP" id="MF_00439">
    <property type="entry name" value="Ycf3"/>
    <property type="match status" value="1"/>
</dbReference>
<dbReference type="InterPro" id="IPR022818">
    <property type="entry name" value="PSI_Ycf3_assembly"/>
</dbReference>
<dbReference type="InterPro" id="IPR011990">
    <property type="entry name" value="TPR-like_helical_dom_sf"/>
</dbReference>
<dbReference type="InterPro" id="IPR019734">
    <property type="entry name" value="TPR_rpt"/>
</dbReference>
<dbReference type="InterPro" id="IPR051685">
    <property type="entry name" value="Ycf3/AcsC/BcsC/TPR_MFPF"/>
</dbReference>
<dbReference type="NCBIfam" id="NF002725">
    <property type="entry name" value="PRK02603.1"/>
    <property type="match status" value="1"/>
</dbReference>
<dbReference type="PANTHER" id="PTHR44943">
    <property type="entry name" value="CELLULOSE SYNTHASE OPERON PROTEIN C"/>
    <property type="match status" value="1"/>
</dbReference>
<dbReference type="PANTHER" id="PTHR44943:SF8">
    <property type="entry name" value="TPR REPEAT-CONTAINING PROTEIN MJ0263"/>
    <property type="match status" value="1"/>
</dbReference>
<dbReference type="Pfam" id="PF00515">
    <property type="entry name" value="TPR_1"/>
    <property type="match status" value="1"/>
</dbReference>
<dbReference type="SMART" id="SM00028">
    <property type="entry name" value="TPR"/>
    <property type="match status" value="3"/>
</dbReference>
<dbReference type="SUPFAM" id="SSF48452">
    <property type="entry name" value="TPR-like"/>
    <property type="match status" value="1"/>
</dbReference>
<dbReference type="PROSITE" id="PS50005">
    <property type="entry name" value="TPR"/>
    <property type="match status" value="3"/>
</dbReference>
<dbReference type="PROSITE" id="PS50293">
    <property type="entry name" value="TPR_REGION"/>
    <property type="match status" value="1"/>
</dbReference>
<reference key="1">
    <citation type="journal article" date="2007" name="Mol. Phylogenet. Evol.">
        <title>Phylogenetic and evolutionary implications of complete chloroplast genome sequences of four early-diverging angiosperms: Buxus (Buxaceae), Chloranthus (Chloranthaceae), Dioscorea (Dioscoreaceae), and Illicium (Schisandraceae).</title>
        <authorList>
            <person name="Hansen D.R."/>
            <person name="Dastidar S.G."/>
            <person name="Cai Z."/>
            <person name="Penaflor C."/>
            <person name="Kuehl J.V."/>
            <person name="Boore J.L."/>
            <person name="Jansen R.K."/>
        </authorList>
    </citation>
    <scope>NUCLEOTIDE SEQUENCE [LARGE SCALE GENOMIC DNA]</scope>
</reference>
<comment type="function">
    <text evidence="1">Essential for the assembly of the photosystem I (PSI) complex. May act as a chaperone-like factor to guide the assembly of the PSI subunits.</text>
</comment>
<comment type="subcellular location">
    <subcellularLocation>
        <location evidence="1">Plastid</location>
        <location evidence="1">Chloroplast thylakoid membrane</location>
        <topology evidence="1">Peripheral membrane protein</topology>
    </subcellularLocation>
</comment>
<comment type="similarity">
    <text evidence="1">Belongs to the Ycf3 family.</text>
</comment>
<name>YCF3_BUXMI</name>
<sequence length="168" mass="19336">MSRSRINGNFIDKTFSIVANILLRIIPTTSGEKEAFTYYRDGMSAQSEGNYAEALQNYYEATRLEIDPYDRSYILYNIGLIHTSNGEHTKALEYYSRALERNPFLPQAFNNMAVICHYRGEQAIRQGDSEIAEAWSDQAAEYWKQAIALTPGNYIEAHNWLKITGRFE</sequence>
<proteinExistence type="inferred from homology"/>
<geneLocation type="chloroplast"/>
<gene>
    <name evidence="1" type="primary">ycf3</name>
</gene>
<evidence type="ECO:0000255" key="1">
    <source>
        <dbReference type="HAMAP-Rule" id="MF_00439"/>
    </source>
</evidence>
<protein>
    <recommendedName>
        <fullName evidence="1">Photosystem I assembly protein Ycf3</fullName>
    </recommendedName>
</protein>
<organism>
    <name type="scientific">Buxus microphylla</name>
    <name type="common">Littleleaf boxwood</name>
    <name type="synonym">Japanese boxwood</name>
    <dbReference type="NCBI Taxonomy" id="153571"/>
    <lineage>
        <taxon>Eukaryota</taxon>
        <taxon>Viridiplantae</taxon>
        <taxon>Streptophyta</taxon>
        <taxon>Embryophyta</taxon>
        <taxon>Tracheophyta</taxon>
        <taxon>Spermatophyta</taxon>
        <taxon>Magnoliopsida</taxon>
        <taxon>Buxales</taxon>
        <taxon>Buxaceae</taxon>
        <taxon>Buxus</taxon>
    </lineage>
</organism>
<keyword id="KW-0150">Chloroplast</keyword>
<keyword id="KW-0472">Membrane</keyword>
<keyword id="KW-0602">Photosynthesis</keyword>
<keyword id="KW-0934">Plastid</keyword>
<keyword id="KW-0677">Repeat</keyword>
<keyword id="KW-0793">Thylakoid</keyword>
<keyword id="KW-0802">TPR repeat</keyword>
<feature type="chain" id="PRO_0000325052" description="Photosystem I assembly protein Ycf3">
    <location>
        <begin position="1"/>
        <end position="168"/>
    </location>
</feature>
<feature type="repeat" description="TPR 1">
    <location>
        <begin position="35"/>
        <end position="68"/>
    </location>
</feature>
<feature type="repeat" description="TPR 2">
    <location>
        <begin position="72"/>
        <end position="105"/>
    </location>
</feature>
<feature type="repeat" description="TPR 3">
    <location>
        <begin position="120"/>
        <end position="153"/>
    </location>
</feature>